<feature type="chain" id="PRO_0000443849" description="Short chain dehydrogenase sor7">
    <location>
        <begin position="1"/>
        <end position="358"/>
    </location>
</feature>
<feature type="region of interest" description="Disordered" evidence="4">
    <location>
        <begin position="1"/>
        <end position="22"/>
    </location>
</feature>
<feature type="active site" description="Proton donor" evidence="3">
    <location>
        <position position="206"/>
    </location>
</feature>
<feature type="active site" description="Lowers pKa of active site Tyr" evidence="3">
    <location>
        <position position="210"/>
    </location>
</feature>
<feature type="binding site" evidence="2">
    <location>
        <position position="34"/>
    </location>
    <ligand>
        <name>NADP(+)</name>
        <dbReference type="ChEBI" id="CHEBI:58349"/>
    </ligand>
</feature>
<feature type="binding site" evidence="2">
    <location>
        <position position="88"/>
    </location>
    <ligand>
        <name>NADP(+)</name>
        <dbReference type="ChEBI" id="CHEBI:58349"/>
    </ligand>
</feature>
<feature type="binding site" evidence="3">
    <location>
        <position position="115"/>
    </location>
    <ligand>
        <name>NADP(+)</name>
        <dbReference type="ChEBI" id="CHEBI:58349"/>
    </ligand>
</feature>
<feature type="binding site" evidence="3">
    <location>
        <position position="206"/>
    </location>
    <ligand>
        <name>NADP(+)</name>
        <dbReference type="ChEBI" id="CHEBI:58349"/>
    </ligand>
</feature>
<feature type="binding site" evidence="3">
    <location>
        <position position="210"/>
    </location>
    <ligand>
        <name>NADP(+)</name>
        <dbReference type="ChEBI" id="CHEBI:58349"/>
    </ligand>
</feature>
<feature type="binding site" evidence="3">
    <location>
        <position position="238"/>
    </location>
    <ligand>
        <name>NADP(+)</name>
        <dbReference type="ChEBI" id="CHEBI:58349"/>
    </ligand>
</feature>
<feature type="binding site" evidence="2">
    <location>
        <position position="240"/>
    </location>
    <ligand>
        <name>NADP(+)</name>
        <dbReference type="ChEBI" id="CHEBI:58349"/>
    </ligand>
</feature>
<evidence type="ECO:0000250" key="1">
    <source>
        <dbReference type="UniProtKB" id="B6HNK3"/>
    </source>
</evidence>
<evidence type="ECO:0000250" key="2">
    <source>
        <dbReference type="UniProtKB" id="L0E2Z4"/>
    </source>
</evidence>
<evidence type="ECO:0000250" key="3">
    <source>
        <dbReference type="UniProtKB" id="O93868"/>
    </source>
</evidence>
<evidence type="ECO:0000256" key="4">
    <source>
        <dbReference type="SAM" id="MobiDB-lite"/>
    </source>
</evidence>
<evidence type="ECO:0000269" key="5">
    <source>
    </source>
</evidence>
<evidence type="ECO:0000269" key="6">
    <source>
    </source>
</evidence>
<evidence type="ECO:0000303" key="7">
    <source>
    </source>
</evidence>
<evidence type="ECO:0000305" key="8"/>
<evidence type="ECO:0000305" key="9">
    <source>
    </source>
</evidence>
<accession>G0R6S7</accession>
<proteinExistence type="inferred from homology"/>
<comment type="function">
    <text evidence="1 5 6">Short chain dehydrogenase; part of the SOR gene cluster that mediates the biosynthesis of sorbicillinoids, a diverse group of yellow secondary metabolites that restrict growth of competing pathogenic fungi but not of bacteria (PubMed:29104566). Sorbicillinoids biosynthesis requires the action of two PKSs (PubMed:28809958). The SOR cluster is required for the production of trichodimerol and dihydrotrichotetronin, with sor2 being sufficient for production of trichodimerol, but not dihydrotrichotetronin in the light (PubMed:28809958). Sor1 iteratively combines three acetyl units and the growing chain is modified by the ketoacyl reductase subunit, and optional by the enoyl reductase subunit in the second cycle (By similarity). The polyketide is then handed over to the PKS sor2, which adds three more acetyl units, and two methyl groups (By similarity). Sor2 releases an aldehyde, which undergoes spontaneous cyclization resulting in the formation of sorbicillin or 2',3'-dihydrosorbicillin (By similarity). The monooxygenase sor5 oxidizes sorbicillin and 2',3'-dihydrosorbicillin to 2',3'-dihydrosorbicillinol and sorbicillinol, respectively (PubMed:29104566). The oxidoreductase sor8 further converts sorbicillinol into oxosorbicillinol (PubMed:29104566). Sorbicillinol is the building block for the other sorbicillinoids such as disorbicillinol, bisvertinolon, dihydrobisvertinolone, and dihydrotrichotetronine (PubMed:28809958, PubMed:29104566).</text>
</comment>
<comment type="pathway">
    <text evidence="9">Secondary metabolite biosynthesis.</text>
</comment>
<comment type="similarity">
    <text evidence="8">Belongs to the short-chain dehydrogenases/reductases (SDR) family.</text>
</comment>
<gene>
    <name evidence="7" type="primary">sor7</name>
    <name type="ORF">TRIREDRAFT_102492</name>
</gene>
<dbReference type="EC" id="1.1.1.-" evidence="9"/>
<dbReference type="EMBL" id="GL985056">
    <property type="protein sequence ID" value="EGR52689.1"/>
    <property type="molecule type" value="Genomic_DNA"/>
</dbReference>
<dbReference type="RefSeq" id="XP_006961560.1">
    <property type="nucleotide sequence ID" value="XM_006961498.1"/>
</dbReference>
<dbReference type="SMR" id="G0R6S7"/>
<dbReference type="STRING" id="431241.G0R6S7"/>
<dbReference type="EnsemblFungi" id="EGR52689">
    <property type="protein sequence ID" value="EGR52689"/>
    <property type="gene ID" value="TRIREDRAFT_102492"/>
</dbReference>
<dbReference type="GeneID" id="18480408"/>
<dbReference type="KEGG" id="tre:TRIREDRAFT_102492"/>
<dbReference type="VEuPathDB" id="FungiDB:TRIREDRAFT_102492"/>
<dbReference type="eggNOG" id="KOG1208">
    <property type="taxonomic scope" value="Eukaryota"/>
</dbReference>
<dbReference type="HOGENOM" id="CLU_010194_44_4_1"/>
<dbReference type="OrthoDB" id="542013at2759"/>
<dbReference type="Proteomes" id="UP000008984">
    <property type="component" value="Unassembled WGS sequence"/>
</dbReference>
<dbReference type="GO" id="GO:0016491">
    <property type="term" value="F:oxidoreductase activity"/>
    <property type="evidence" value="ECO:0007669"/>
    <property type="project" value="UniProtKB-KW"/>
</dbReference>
<dbReference type="Gene3D" id="3.40.50.720">
    <property type="entry name" value="NAD(P)-binding Rossmann-like Domain"/>
    <property type="match status" value="1"/>
</dbReference>
<dbReference type="InterPro" id="IPR036291">
    <property type="entry name" value="NAD(P)-bd_dom_sf"/>
</dbReference>
<dbReference type="InterPro" id="IPR002347">
    <property type="entry name" value="SDR_fam"/>
</dbReference>
<dbReference type="PANTHER" id="PTHR24320:SF252">
    <property type="entry name" value="DEHYDROGENASE_REDUCTASE FAMILY PROTEIN, PUTATIVE (AFU_ORTHOLOGUE AFUA_3G08550)-RELATED"/>
    <property type="match status" value="1"/>
</dbReference>
<dbReference type="PANTHER" id="PTHR24320">
    <property type="entry name" value="RETINOL DEHYDROGENASE"/>
    <property type="match status" value="1"/>
</dbReference>
<dbReference type="Pfam" id="PF00106">
    <property type="entry name" value="adh_short"/>
    <property type="match status" value="1"/>
</dbReference>
<dbReference type="PRINTS" id="PR00081">
    <property type="entry name" value="GDHRDH"/>
</dbReference>
<dbReference type="SUPFAM" id="SSF51735">
    <property type="entry name" value="NAD(P)-binding Rossmann-fold domains"/>
    <property type="match status" value="1"/>
</dbReference>
<protein>
    <recommendedName>
        <fullName evidence="7">Short chain dehydrogenase sor7</fullName>
        <ecNumber evidence="9">1.1.1.-</ecNumber>
    </recommendedName>
    <alternativeName>
        <fullName evidence="7">Sorbicillinoid biosynthetic cluster protein 7</fullName>
    </alternativeName>
</protein>
<organism>
    <name type="scientific">Hypocrea jecorina (strain QM6a)</name>
    <name type="common">Trichoderma reesei</name>
    <dbReference type="NCBI Taxonomy" id="431241"/>
    <lineage>
        <taxon>Eukaryota</taxon>
        <taxon>Fungi</taxon>
        <taxon>Dikarya</taxon>
        <taxon>Ascomycota</taxon>
        <taxon>Pezizomycotina</taxon>
        <taxon>Sordariomycetes</taxon>
        <taxon>Hypocreomycetidae</taxon>
        <taxon>Hypocreales</taxon>
        <taxon>Hypocreaceae</taxon>
        <taxon>Trichoderma</taxon>
    </lineage>
</organism>
<sequence>MSSPAIGQPPIPPTPTDANISGKTVIVTGGNSGLGYEAARQFLTLGASRMILACRSIARGQEAASALRAHPTVKETNPNAVIDAFELDLDDYYSGLCFSNRVNAEVKELDILLNNGGQVVMGYEKSKSGHERSMQVNCYTHLLISLELFPLLRSTSAARGVPSRITFTGSATQIMQNTLSKQPISSESTVLGHFDDEANFNKLYRYADSKTVVNAYVRRLAALAPSEVIVNNACPGLVQTGIDKNLPFYLKLPMGLLRKSTGRTVEEGARTLIYVAVVAGTETNGKFLQHNQVDPLASTYTFAFPCYMERRPPECFSVSLEHGSKAQESLLAWNTSILRSFHGGGSAWRNTFNLALTI</sequence>
<reference key="1">
    <citation type="journal article" date="2008" name="Nat. Biotechnol.">
        <title>Genome sequencing and analysis of the biomass-degrading fungus Trichoderma reesei (syn. Hypocrea jecorina).</title>
        <authorList>
            <person name="Martinez D."/>
            <person name="Berka R.M."/>
            <person name="Henrissat B."/>
            <person name="Saloheimo M."/>
            <person name="Arvas M."/>
            <person name="Baker S.E."/>
            <person name="Chapman J."/>
            <person name="Chertkov O."/>
            <person name="Coutinho P.M."/>
            <person name="Cullen D."/>
            <person name="Danchin E.G."/>
            <person name="Grigoriev I.V."/>
            <person name="Harris P."/>
            <person name="Jackson M."/>
            <person name="Kubicek C.P."/>
            <person name="Han C.S."/>
            <person name="Ho I."/>
            <person name="Larrondo L.F."/>
            <person name="de Leon A.L."/>
            <person name="Magnuson J.K."/>
            <person name="Merino S."/>
            <person name="Misra M."/>
            <person name="Nelson B."/>
            <person name="Putnam N."/>
            <person name="Robbertse B."/>
            <person name="Salamov A.A."/>
            <person name="Schmoll M."/>
            <person name="Terry A."/>
            <person name="Thayer N."/>
            <person name="Westerholm-Parvinen A."/>
            <person name="Schoch C.L."/>
            <person name="Yao J."/>
            <person name="Barabote R."/>
            <person name="Nelson M.A."/>
            <person name="Detter C."/>
            <person name="Bruce D."/>
            <person name="Kuske C.R."/>
            <person name="Xie G."/>
            <person name="Richardson P."/>
            <person name="Rokhsar D.S."/>
            <person name="Lucas S.M."/>
            <person name="Rubin E.M."/>
            <person name="Dunn-Coleman N."/>
            <person name="Ward M."/>
            <person name="Brettin T.S."/>
        </authorList>
    </citation>
    <scope>NUCLEOTIDE SEQUENCE [LARGE SCALE GENOMIC DNA]</scope>
    <source>
        <strain>QM6a</strain>
    </source>
</reference>
<reference key="2">
    <citation type="journal article" date="2016" name="BMC Evol. Biol.">
        <title>Several steps of lateral gene transfer followed by events of 'birth-and-death' evolution shaped a fungal sorbicillinoid biosynthetic gene cluster.</title>
        <authorList>
            <person name="Druzhinina I.S."/>
            <person name="Kubicek E.M."/>
            <person name="Kubicek C.P."/>
        </authorList>
    </citation>
    <scope>IDENTIFICATION</scope>
    <scope>FUNCTION</scope>
</reference>
<reference key="3">
    <citation type="journal article" date="2017" name="Front. Microbiol.">
        <title>In vivo study of the sorbicillinoid gene cluster in Trichoderma reesei.</title>
        <authorList>
            <person name="Derntl C."/>
            <person name="Guzman-Chavez F."/>
            <person name="Mello-de-Sousa T.M."/>
            <person name="Busse H.J."/>
            <person name="Driessen A.J.M."/>
            <person name="Mach R.L."/>
            <person name="Mach-Aigner A.R."/>
        </authorList>
    </citation>
    <scope>FUNCTION</scope>
</reference>
<reference key="4">
    <citation type="journal article" date="2017" name="PLoS ONE">
        <title>A CRE1-regulated cluster is responsible for light dependent production of dihydrotrichotetronin in Trichoderma reesei.</title>
        <authorList>
            <person name="Monroy A.A."/>
            <person name="Stappler E."/>
            <person name="Schuster A."/>
            <person name="Sulyok M."/>
            <person name="Schmoll M."/>
        </authorList>
    </citation>
    <scope>FUNCTION</scope>
</reference>
<name>SOR7_HYPJQ</name>
<keyword id="KW-0521">NADP</keyword>
<keyword id="KW-0560">Oxidoreductase</keyword>
<keyword id="KW-1185">Reference proteome</keyword>